<dbReference type="EMBL" id="CP000668">
    <property type="protein sequence ID" value="ABP38971.1"/>
    <property type="molecule type" value="Genomic_DNA"/>
</dbReference>
<dbReference type="RefSeq" id="WP_002230648.1">
    <property type="nucleotide sequence ID" value="NZ_CP009715.1"/>
</dbReference>
<dbReference type="SMR" id="A4TI59"/>
<dbReference type="KEGG" id="ypp:YPDSF_0561"/>
<dbReference type="PATRIC" id="fig|386656.14.peg.1879"/>
<dbReference type="GO" id="GO:0005829">
    <property type="term" value="C:cytosol"/>
    <property type="evidence" value="ECO:0007669"/>
    <property type="project" value="TreeGrafter"/>
</dbReference>
<dbReference type="GO" id="GO:0005506">
    <property type="term" value="F:iron ion binding"/>
    <property type="evidence" value="ECO:0007669"/>
    <property type="project" value="UniProtKB-UniRule"/>
</dbReference>
<dbReference type="GO" id="GO:0034599">
    <property type="term" value="P:cellular response to oxidative stress"/>
    <property type="evidence" value="ECO:0007669"/>
    <property type="project" value="TreeGrafter"/>
</dbReference>
<dbReference type="FunFam" id="1.10.3880.10:FF:000001">
    <property type="entry name" value="Probable Fe(2+)-trafficking protein"/>
    <property type="match status" value="1"/>
</dbReference>
<dbReference type="Gene3D" id="1.10.3880.10">
    <property type="entry name" value="Fe(II) trafficking protein YggX"/>
    <property type="match status" value="1"/>
</dbReference>
<dbReference type="HAMAP" id="MF_00686">
    <property type="entry name" value="Fe_traffic_YggX"/>
    <property type="match status" value="1"/>
</dbReference>
<dbReference type="InterPro" id="IPR007457">
    <property type="entry name" value="Fe_traffick_prot_YggX"/>
</dbReference>
<dbReference type="InterPro" id="IPR036766">
    <property type="entry name" value="Fe_traffick_prot_YggX_sf"/>
</dbReference>
<dbReference type="NCBIfam" id="NF003817">
    <property type="entry name" value="PRK05408.1"/>
    <property type="match status" value="1"/>
</dbReference>
<dbReference type="PANTHER" id="PTHR36965">
    <property type="entry name" value="FE(2+)-TRAFFICKING PROTEIN-RELATED"/>
    <property type="match status" value="1"/>
</dbReference>
<dbReference type="PANTHER" id="PTHR36965:SF1">
    <property type="entry name" value="FE(2+)-TRAFFICKING PROTEIN-RELATED"/>
    <property type="match status" value="1"/>
</dbReference>
<dbReference type="Pfam" id="PF04362">
    <property type="entry name" value="Iron_traffic"/>
    <property type="match status" value="1"/>
</dbReference>
<dbReference type="PIRSF" id="PIRSF029827">
    <property type="entry name" value="Fe_traffic_YggX"/>
    <property type="match status" value="1"/>
</dbReference>
<dbReference type="SUPFAM" id="SSF111148">
    <property type="entry name" value="YggX-like"/>
    <property type="match status" value="1"/>
</dbReference>
<reference key="1">
    <citation type="submission" date="2007-02" db="EMBL/GenBank/DDBJ databases">
        <title>Complete sequence of chromosome of Yersinia pestis Pestoides F.</title>
        <authorList>
            <consortium name="US DOE Joint Genome Institute"/>
            <person name="Copeland A."/>
            <person name="Lucas S."/>
            <person name="Lapidus A."/>
            <person name="Barry K."/>
            <person name="Detter J.C."/>
            <person name="Glavina del Rio T."/>
            <person name="Hammon N."/>
            <person name="Israni S."/>
            <person name="Dalin E."/>
            <person name="Tice H."/>
            <person name="Pitluck S."/>
            <person name="Di Bartolo G."/>
            <person name="Chain P."/>
            <person name="Malfatti S."/>
            <person name="Shin M."/>
            <person name="Vergez L."/>
            <person name="Schmutz J."/>
            <person name="Larimer F."/>
            <person name="Land M."/>
            <person name="Hauser L."/>
            <person name="Worsham P."/>
            <person name="Chu M."/>
            <person name="Bearden S."/>
            <person name="Garcia E."/>
            <person name="Richardson P."/>
        </authorList>
    </citation>
    <scope>NUCLEOTIDE SEQUENCE [LARGE SCALE GENOMIC DNA]</scope>
    <source>
        <strain>Pestoides F</strain>
    </source>
</reference>
<accession>A4TI59</accession>
<comment type="function">
    <text evidence="1">Could be a mediator in iron transactions between iron acquisition and iron-requiring processes, such as synthesis and/or repair of Fe-S clusters in biosynthetic enzymes.</text>
</comment>
<comment type="subunit">
    <text evidence="1">Monomer.</text>
</comment>
<comment type="similarity">
    <text evidence="1">Belongs to the Fe(2+)-trafficking protein family.</text>
</comment>
<proteinExistence type="inferred from homology"/>
<sequence length="90" mass="10608">MSRTIFCTFLKKDAEGQDFQLYPGEIGKRIYNEISKEAWSQWITKQTMLINEKKLSMMNIEDRKLLEQEMVNFLFEGQDVHIAGYTPPSK</sequence>
<gene>
    <name type="ordered locus">YPDSF_0561</name>
</gene>
<name>FETP_YERPP</name>
<keyword id="KW-0408">Iron</keyword>
<organism>
    <name type="scientific">Yersinia pestis (strain Pestoides F)</name>
    <dbReference type="NCBI Taxonomy" id="386656"/>
    <lineage>
        <taxon>Bacteria</taxon>
        <taxon>Pseudomonadati</taxon>
        <taxon>Pseudomonadota</taxon>
        <taxon>Gammaproteobacteria</taxon>
        <taxon>Enterobacterales</taxon>
        <taxon>Yersiniaceae</taxon>
        <taxon>Yersinia</taxon>
    </lineage>
</organism>
<evidence type="ECO:0000255" key="1">
    <source>
        <dbReference type="HAMAP-Rule" id="MF_00686"/>
    </source>
</evidence>
<protein>
    <recommendedName>
        <fullName evidence="1">Probable Fe(2+)-trafficking protein</fullName>
    </recommendedName>
</protein>
<feature type="chain" id="PRO_1000045077" description="Probable Fe(2+)-trafficking protein">
    <location>
        <begin position="1"/>
        <end position="90"/>
    </location>
</feature>